<accession>P0DJE3</accession>
<accession>A0A089FYN5</accession>
<accession>L7XGA0</accession>
<feature type="signal peptide" evidence="2">
    <location>
        <begin position="1"/>
        <end position="20"/>
    </location>
</feature>
<feature type="chain" id="PRO_0000415932" description="Alpha-latrotoxin-Lhe1a">
    <location>
        <begin position="21"/>
        <end position="1199"/>
    </location>
</feature>
<feature type="propeptide" id="PRO_0000432877" evidence="2">
    <location>
        <begin position="1200"/>
        <end position="1418"/>
    </location>
</feature>
<feature type="repeat" description="ANK 1" evidence="4">
    <location>
        <begin position="458"/>
        <end position="489"/>
    </location>
</feature>
<feature type="repeat" description="ANK 2" evidence="4">
    <location>
        <begin position="490"/>
        <end position="521"/>
    </location>
</feature>
<feature type="repeat" description="ANK 3" evidence="4">
    <location>
        <begin position="525"/>
        <end position="554"/>
    </location>
</feature>
<feature type="repeat" description="ANK 4" evidence="4">
    <location>
        <begin position="559"/>
        <end position="589"/>
    </location>
</feature>
<feature type="repeat" description="ANK 5" evidence="4">
    <location>
        <begin position="593"/>
        <end position="622"/>
    </location>
</feature>
<feature type="repeat" description="ANK 6" evidence="4">
    <location>
        <begin position="626"/>
        <end position="656"/>
    </location>
</feature>
<feature type="repeat" description="ANK 7" evidence="4">
    <location>
        <begin position="660"/>
        <end position="690"/>
    </location>
</feature>
<feature type="repeat" description="ANK 8" evidence="4">
    <location>
        <begin position="695"/>
        <end position="723"/>
    </location>
</feature>
<feature type="repeat" description="ANK 9" evidence="4">
    <location>
        <begin position="729"/>
        <end position="758"/>
    </location>
</feature>
<feature type="repeat" description="ANK 10" evidence="4">
    <location>
        <begin position="762"/>
        <end position="791"/>
    </location>
</feature>
<feature type="repeat" description="ANK 11" evidence="4">
    <location>
        <begin position="795"/>
        <end position="824"/>
    </location>
</feature>
<feature type="repeat" description="ANK 12" evidence="4">
    <location>
        <begin position="828"/>
        <end position="857"/>
    </location>
</feature>
<feature type="repeat" description="ANK 13" evidence="4">
    <location>
        <begin position="862"/>
        <end position="891"/>
    </location>
</feature>
<feature type="repeat" description="ANK 14" evidence="4">
    <location>
        <begin position="895"/>
        <end position="924"/>
    </location>
</feature>
<feature type="repeat" description="ANK 15" evidence="4">
    <location>
        <begin position="928"/>
        <end position="957"/>
    </location>
</feature>
<feature type="repeat" description="ANK 16" evidence="4">
    <location>
        <begin position="971"/>
        <end position="1003"/>
    </location>
</feature>
<feature type="repeat" description="ANK 17" evidence="4">
    <location>
        <begin position="1004"/>
        <end position="1033"/>
    </location>
</feature>
<feature type="repeat" description="ANK 18" evidence="4">
    <location>
        <begin position="1035"/>
        <end position="1064"/>
    </location>
</feature>
<feature type="repeat" description="ANK 19" evidence="4">
    <location>
        <begin position="1068"/>
        <end position="1097"/>
    </location>
</feature>
<feature type="repeat" description="ANK 20" evidence="4">
    <location>
        <begin position="1101"/>
        <end position="1131"/>
    </location>
</feature>
<feature type="repeat" description="ANK 21" evidence="4">
    <location>
        <begin position="1137"/>
        <end position="1166"/>
    </location>
</feature>
<feature type="repeat" description="ANK 22" evidence="4">
    <location>
        <begin position="1170"/>
        <end position="1199"/>
    </location>
</feature>
<feature type="region of interest" description="Furin-like endopeptidase recognition region" evidence="2">
    <location>
        <begin position="17"/>
        <end position="20"/>
    </location>
</feature>
<feature type="region of interest" description="Helix H8 is the probable transmembrane region of the tetrameric pore inserted in the target cell membrane" evidence="3">
    <location>
        <begin position="238"/>
        <end position="257"/>
    </location>
</feature>
<feature type="region of interest" description="4C4.1 epitope" evidence="2">
    <location>
        <begin position="1026"/>
        <end position="1032"/>
    </location>
</feature>
<feature type="region of interest" description="Furin-like endopeptidase recognition region" evidence="2">
    <location>
        <begin position="1196"/>
        <end position="1199"/>
    </location>
</feature>
<feature type="disulfide bond" evidence="2">
    <location>
        <begin position="413"/>
        <end position="1066"/>
    </location>
</feature>
<feature type="sequence conflict" description="In Ref. 3; AA sequence." evidence="7" ref="3">
    <original>S</original>
    <variation>P</variation>
    <location>
        <position position="583"/>
    </location>
</feature>
<feature type="sequence conflict" description="In Ref. 2; AIP91371." evidence="7" ref="2">
    <original>K</original>
    <variation>T</variation>
    <location>
        <position position="1192"/>
    </location>
</feature>
<organism>
    <name type="scientific">Latrodectus hesperus</name>
    <name type="common">Western black widow spider</name>
    <dbReference type="NCBI Taxonomy" id="256737"/>
    <lineage>
        <taxon>Eukaryota</taxon>
        <taxon>Metazoa</taxon>
        <taxon>Ecdysozoa</taxon>
        <taxon>Arthropoda</taxon>
        <taxon>Chelicerata</taxon>
        <taxon>Arachnida</taxon>
        <taxon>Araneae</taxon>
        <taxon>Araneomorphae</taxon>
        <taxon>Entelegynae</taxon>
        <taxon>Araneoidea</taxon>
        <taxon>Theridiidae</taxon>
        <taxon>Latrodectus</taxon>
    </lineage>
</organism>
<evidence type="ECO:0000250" key="1">
    <source>
        <dbReference type="UniProtKB" id="P0DJE4"/>
    </source>
</evidence>
<evidence type="ECO:0000250" key="2">
    <source>
        <dbReference type="UniProtKB" id="P23631"/>
    </source>
</evidence>
<evidence type="ECO:0000250" key="3">
    <source>
        <dbReference type="UniProtKB" id="Q9XZC0"/>
    </source>
</evidence>
<evidence type="ECO:0000255" key="4"/>
<evidence type="ECO:0000269" key="5">
    <source>
    </source>
</evidence>
<evidence type="ECO:0000303" key="6">
    <source>
    </source>
</evidence>
<evidence type="ECO:0000305" key="7"/>
<dbReference type="EMBL" id="KM382064">
    <property type="protein sequence ID" value="AIP91371.1"/>
    <property type="molecule type" value="Genomic_DNA"/>
</dbReference>
<dbReference type="EMBL" id="KC414032">
    <property type="protein sequence ID" value="AGD80166.1"/>
    <property type="molecule type" value="Genomic_DNA"/>
</dbReference>
<dbReference type="SMR" id="P0DJE3"/>
<dbReference type="GO" id="GO:0005576">
    <property type="term" value="C:extracellular region"/>
    <property type="evidence" value="ECO:0007669"/>
    <property type="project" value="UniProtKB-SubCell"/>
</dbReference>
<dbReference type="GO" id="GO:0044231">
    <property type="term" value="C:host cell presynaptic membrane"/>
    <property type="evidence" value="ECO:0007669"/>
    <property type="project" value="UniProtKB-KW"/>
</dbReference>
<dbReference type="GO" id="GO:0016020">
    <property type="term" value="C:membrane"/>
    <property type="evidence" value="ECO:0007669"/>
    <property type="project" value="UniProtKB-KW"/>
</dbReference>
<dbReference type="GO" id="GO:0044218">
    <property type="term" value="C:other organism cell membrane"/>
    <property type="evidence" value="ECO:0007669"/>
    <property type="project" value="UniProtKB-KW"/>
</dbReference>
<dbReference type="GO" id="GO:0090729">
    <property type="term" value="F:toxin activity"/>
    <property type="evidence" value="ECO:0007669"/>
    <property type="project" value="UniProtKB-KW"/>
</dbReference>
<dbReference type="GO" id="GO:0006887">
    <property type="term" value="P:exocytosis"/>
    <property type="evidence" value="ECO:0007669"/>
    <property type="project" value="UniProtKB-KW"/>
</dbReference>
<dbReference type="Gene3D" id="1.25.40.20">
    <property type="entry name" value="Ankyrin repeat-containing domain"/>
    <property type="match status" value="5"/>
</dbReference>
<dbReference type="InterPro" id="IPR002110">
    <property type="entry name" value="Ankyrin_rpt"/>
</dbReference>
<dbReference type="InterPro" id="IPR036770">
    <property type="entry name" value="Ankyrin_rpt-contain_sf"/>
</dbReference>
<dbReference type="PANTHER" id="PTHR24198">
    <property type="entry name" value="ANKYRIN REPEAT AND PROTEIN KINASE DOMAIN-CONTAINING PROTEIN"/>
    <property type="match status" value="1"/>
</dbReference>
<dbReference type="PANTHER" id="PTHR24198:SF165">
    <property type="entry name" value="ANKYRIN REPEAT-CONTAINING PROTEIN-RELATED"/>
    <property type="match status" value="1"/>
</dbReference>
<dbReference type="Pfam" id="PF12796">
    <property type="entry name" value="Ank_2"/>
    <property type="match status" value="7"/>
</dbReference>
<dbReference type="Pfam" id="PF13637">
    <property type="entry name" value="Ank_4"/>
    <property type="match status" value="1"/>
</dbReference>
<dbReference type="PRINTS" id="PR01415">
    <property type="entry name" value="ANKYRIN"/>
</dbReference>
<dbReference type="SMART" id="SM00248">
    <property type="entry name" value="ANK"/>
    <property type="match status" value="20"/>
</dbReference>
<dbReference type="SUPFAM" id="SSF48403">
    <property type="entry name" value="Ankyrin repeat"/>
    <property type="match status" value="3"/>
</dbReference>
<dbReference type="PROSITE" id="PS50297">
    <property type="entry name" value="ANK_REP_REGION"/>
    <property type="match status" value="1"/>
</dbReference>
<dbReference type="PROSITE" id="PS50088">
    <property type="entry name" value="ANK_REPEAT"/>
    <property type="match status" value="11"/>
</dbReference>
<protein>
    <recommendedName>
        <fullName evidence="6">Alpha-latrotoxin-Lhe1a</fullName>
        <shortName evidence="6">Alpha-LTX-Lhe1a</shortName>
    </recommendedName>
    <alternativeName>
        <fullName evidence="6">Alpha-latrotoxin</fullName>
        <shortName evidence="6">Alpha-LTX</shortName>
    </alternativeName>
</protein>
<sequence>MIFVGETMERANHSLVRLRREGEELTLDEKAEICSELELQQKYVDIASNIIGDLSSLPMVGKIVGTIAAAAMTVTHVASGRLDIEQTLLGCSDLPFDQIKEVLEKRFNEVDRKLESHSAALEEITKLVEKSISAVEKTRKQMNKRFDEVMKSIQDAKVSPIVSKINNFARYFDTEKERIRGLKLNDYILKLEEPNGILLHFKESRTPKDDSLQAPLFSIIQEGYAVPKSIDDESAFKVLYALLYGTQTYISVMFFLLEQYSFLANHYYEKGDLEKYDEYFNSLNNVFLDFKSSLVGTGTSNNEGLIDKVLQVLMTFKNSEFLGLGKNGVDEMLNEKINLFNKIKEEIESKQRMTMSETPENFAQISFDKDITTPIGDWRDGREVRYAVQYASETLFSKIGHWSDPVSVREKACPTLRMPVDQTRRNVLVFRKFDNSKPQLVGEITPYLSNFIDIDRDLYNAASNPDSAVGFKEFTKLNYDGANIRATFDQGRTIFHAVAKSGNDKILFGLTFLVKSTELNQPDKKGYTPIHVAADSGNAGIVNLLIQRGVSINSKTYHFLQTPLHLAAQRGFVNTFQRLMESSEININERDKDGFTPLHYAVRGGERILEAFMNQIGIDVNAKSNKGLTPFHLAIIKNDWQVASTLLRNKKVDINAVDENNMTALHYAAILGYLETTKQLINLKEINANVVSSPGLLSALHYAILYKHDDVASFLLRSSNVNVNLKALGGITPLHLAVMQGRKQVLSLMFNIGVNIEQQTDEKYTPLHLAAMSKYPELIQILLDQDSNFEAKTNSGATPLHLATFKGKSQAALILLNNEVNWRDTDENGQMPIHGAATTGLLDVAQAIISIDATVLDIEDKNSDTPLNLAAQNSHIDAVKYFIDQGADINTRNKNGHAPLLAFSKKGNLDMVKYLFDKNANVYIADNNGMNFFYYAVRNGHLNIIKYAMSEKDKFEWSNIDNNRRDECPKEECAISHFAVCDAVQFDKIEIVKFFIGTLGNFNICGPLHQAARYGHLHIVKYLVEEEVLSVDGSKTDTPLCYASENGHLAVVQYLVSNGAKVNHDCANGMTAIDKAITKNHLQVVQFLAANGVDFRRKNSRGATPFLTAVAENAFDIAEYLIREKRQDININEQNVDKETALHLAVYYKNLQMIKLLVKYGIDVTIRNAYDKTVLDIATDAKFSNIVKYLKKNSGKFRREYKSSYGEHSFLQTNEISRFIDGKSIEHDHPQFINADNESSQLFSGTASKIDVIGTLLLIDVLIRYFSKQGYISKESDSASDGITQAAALSITEKFEDVLNSLPNKSAKEQVDLADVHGKVYAALKSGRNSQIHQILCSSLKSISTLKPEDMEKLVSVIMNSHSSLSMPEATDSANEAYGETLHLFGESCRHSEDYISQKFSTNPFSFESEKKIQKISI</sequence>
<keyword id="KW-0040">ANK repeat</keyword>
<keyword id="KW-0165">Cleavage on pair of basic residues</keyword>
<keyword id="KW-0903">Direct protein sequencing</keyword>
<keyword id="KW-1015">Disulfide bond</keyword>
<keyword id="KW-0268">Exocytosis</keyword>
<keyword id="KW-0472">Membrane</keyword>
<keyword id="KW-0528">Neurotoxin</keyword>
<keyword id="KW-0638">Presynaptic neurotoxin</keyword>
<keyword id="KW-0677">Repeat</keyword>
<keyword id="KW-0964">Secreted</keyword>
<keyword id="KW-0732">Signal</keyword>
<keyword id="KW-1052">Target cell membrane</keyword>
<keyword id="KW-1053">Target membrane</keyword>
<keyword id="KW-0800">Toxin</keyword>
<keyword id="KW-0812">Transmembrane</keyword>
<reference key="1">
    <citation type="journal article" date="2014" name="FEBS Lett.">
        <title>Gene structure, regulatory control, and evolution of black widow venom latrotoxins.</title>
        <authorList>
            <person name="Bhere K.V."/>
            <person name="Haney R.A."/>
            <person name="Ayoub N.A."/>
            <person name="Garb J.E."/>
        </authorList>
    </citation>
    <scope>NUCLEOTIDE SEQUENCE [GENOMIC DNA]</scope>
</reference>
<reference key="2">
    <citation type="journal article" date="2013" name="Mol. Biol. Evol.">
        <title>Molecular evolution of alpha-latrotoxin, the exceptionally potent vertebrate neurotoxin in black widow spider venom.</title>
        <authorList>
            <person name="Garb J.E."/>
            <person name="Hayashi C.Y."/>
        </authorList>
    </citation>
    <scope>NUCLEOTIDE SEQUENCE [GENOMIC DNA] OF 12-1390</scope>
    <source>
        <strain>Riverside (California)</strain>
    </source>
</reference>
<reference key="3">
    <citation type="journal article" date="2012" name="Biochem. Pharmacol.">
        <title>Cloning and activity of a novel alpha-latrotoxin from red-back spider venom.</title>
        <authorList>
            <person name="Graudins A."/>
            <person name="Little M.J."/>
            <person name="Pineda S.S."/>
            <person name="Hains P.G."/>
            <person name="King G.F."/>
            <person name="Broady K.W."/>
            <person name="Nicholson G.M."/>
        </authorList>
    </citation>
    <scope>PROTEIN SEQUENCE OF 386-398 AND 582-590</scope>
    <scope>IDENTIFICATION BY MASS SPECTROMETRY</scope>
    <scope>SUBCELLULAR LOCATION</scope>
    <source>
        <tissue>Venom</tissue>
    </source>
</reference>
<comment type="function">
    <text evidence="2">Presynaptic neurotoxin that causes massive release of neurotransmitters from vertebrate (but not invertebrate) nerve terminals and endocrine cells via a complex mechanism involving activation of receptor(s) and toxin insertion into the plasma membrane with subsequent pore formation. Binds to neurexin-1-alpha (NRXN1) in a calcium dependent manner, adhesion G protein-coupled receptor L1 (ADGRL1, also termed latrophilin-1 and calcium-independent receptor of latrotoxin (CIRL)), and receptor-type tyrosine-protein phosphatase S (PTPRS), also termed PTP sigma. NRXN1 and PTPRS are suggested to provide a platform for binding and subsequent pore formation events. In contrast, binding to ADGRL1 does not involve oligomerization and channel formation, but direct downstream stimulation of the synaptic fusion machinery.</text>
</comment>
<comment type="subunit">
    <text evidence="2">Homotetramer in membranes.</text>
</comment>
<comment type="subcellular location">
    <subcellularLocation>
        <location evidence="5">Secreted</location>
    </subcellularLocation>
    <subcellularLocation>
        <location evidence="2">Target cell membrane</location>
    </subcellularLocation>
    <text evidence="2">Forms a membrane channel in the prey.</text>
</comment>
<comment type="tissue specificity">
    <text evidence="1">Expressed in venom gland, cephalothorax, and abdomen tissues from both males and females.</text>
</comment>
<comment type="developmental stage">
    <text evidence="1">Expressed in all life stages examined, including adults, spiderlings and eggs.</text>
</comment>
<comment type="domain">
    <text evidence="3">The H8 helix is predicted to insert into membranes and form pores by assembling into tetramers. The helix is contained within a helical bundle domain that undergoes significant conformational changes during pore formation to allow exposure of the H8 transmembrane helix and transition of the toxin from a soluble monomer to a transmembrane tetramer.</text>
</comment>
<comment type="PTM">
    <text>Processed by furin-like proteases at both the N- and C-termini.</text>
</comment>
<comment type="miscellaneous">
    <text>Is the main neurotoxin responsible for the human envenomation syndrome known as latrodectism that results from bites by Latrodectus species.</text>
</comment>
<comment type="similarity">
    <text evidence="7">Belongs to the cationic peptide 01 (latrotoxin) family. 03 (alpha-latrotoxin) subfamily.</text>
</comment>
<proteinExistence type="evidence at protein level"/>
<name>LATA_LATHE</name>